<feature type="chain" id="PRO_0000239194" description="DEAD-box ATP-dependent RNA helicase 55">
    <location>
        <begin position="1"/>
        <end position="465"/>
    </location>
</feature>
<feature type="domain" description="Helicase ATP-binding" evidence="1">
    <location>
        <begin position="48"/>
        <end position="219"/>
    </location>
</feature>
<feature type="domain" description="Helicase C-terminal" evidence="2">
    <location>
        <begin position="228"/>
        <end position="422"/>
    </location>
</feature>
<feature type="region of interest" description="Disordered" evidence="3">
    <location>
        <begin position="413"/>
        <end position="465"/>
    </location>
</feature>
<feature type="short sequence motif" description="Q motif">
    <location>
        <begin position="17"/>
        <end position="45"/>
    </location>
</feature>
<feature type="short sequence motif" description="DEAD box">
    <location>
        <begin position="167"/>
        <end position="170"/>
    </location>
</feature>
<feature type="compositionally biased region" description="Basic and acidic residues" evidence="3">
    <location>
        <begin position="428"/>
        <end position="437"/>
    </location>
</feature>
<feature type="compositionally biased region" description="Acidic residues" evidence="3">
    <location>
        <begin position="456"/>
        <end position="465"/>
    </location>
</feature>
<feature type="binding site" evidence="1">
    <location>
        <begin position="61"/>
        <end position="68"/>
    </location>
    <ligand>
        <name>ATP</name>
        <dbReference type="ChEBI" id="CHEBI:30616"/>
    </ligand>
</feature>
<gene>
    <name type="primary">RH55</name>
    <name type="ordered locus">At1g71280</name>
    <name type="ORF">F3I17.7</name>
</gene>
<dbReference type="EC" id="3.6.4.13"/>
<dbReference type="EMBL" id="AC016162">
    <property type="protein sequence ID" value="AAG51890.1"/>
    <property type="molecule type" value="Genomic_DNA"/>
</dbReference>
<dbReference type="EMBL" id="CP002684">
    <property type="protein sequence ID" value="AEE35183.1"/>
    <property type="molecule type" value="Genomic_DNA"/>
</dbReference>
<dbReference type="PIR" id="E96737">
    <property type="entry name" value="E96737"/>
</dbReference>
<dbReference type="RefSeq" id="NP_177284.1">
    <property type="nucleotide sequence ID" value="NM_105797.2"/>
</dbReference>
<dbReference type="SMR" id="Q9FVV4"/>
<dbReference type="BioGRID" id="28689">
    <property type="interactions" value="1"/>
</dbReference>
<dbReference type="FunCoup" id="Q9FVV4">
    <property type="interactions" value="3997"/>
</dbReference>
<dbReference type="STRING" id="3702.Q9FVV4"/>
<dbReference type="PaxDb" id="3702-AT1G71280.1"/>
<dbReference type="EnsemblPlants" id="AT1G71280.1">
    <property type="protein sequence ID" value="AT1G71280.1"/>
    <property type="gene ID" value="AT1G71280"/>
</dbReference>
<dbReference type="GeneID" id="843469"/>
<dbReference type="Gramene" id="AT1G71280.1">
    <property type="protein sequence ID" value="AT1G71280.1"/>
    <property type="gene ID" value="AT1G71280"/>
</dbReference>
<dbReference type="KEGG" id="ath:AT1G71280"/>
<dbReference type="Araport" id="AT1G71280"/>
<dbReference type="TAIR" id="AT1G71280"/>
<dbReference type="eggNOG" id="KOG0345">
    <property type="taxonomic scope" value="Eukaryota"/>
</dbReference>
<dbReference type="HOGENOM" id="CLU_003041_26_4_1"/>
<dbReference type="InParanoid" id="Q9FVV4"/>
<dbReference type="PhylomeDB" id="Q9FVV4"/>
<dbReference type="PRO" id="PR:Q9FVV4"/>
<dbReference type="Proteomes" id="UP000006548">
    <property type="component" value="Chromosome 1"/>
</dbReference>
<dbReference type="ExpressionAtlas" id="Q9FVV4">
    <property type="expression patterns" value="baseline and differential"/>
</dbReference>
<dbReference type="GO" id="GO:0005524">
    <property type="term" value="F:ATP binding"/>
    <property type="evidence" value="ECO:0007669"/>
    <property type="project" value="UniProtKB-KW"/>
</dbReference>
<dbReference type="GO" id="GO:0016887">
    <property type="term" value="F:ATP hydrolysis activity"/>
    <property type="evidence" value="ECO:0007669"/>
    <property type="project" value="RHEA"/>
</dbReference>
<dbReference type="GO" id="GO:0008266">
    <property type="term" value="F:poly(U) RNA binding"/>
    <property type="evidence" value="ECO:0000314"/>
    <property type="project" value="TAIR"/>
</dbReference>
<dbReference type="GO" id="GO:0003724">
    <property type="term" value="F:RNA helicase activity"/>
    <property type="evidence" value="ECO:0007669"/>
    <property type="project" value="UniProtKB-EC"/>
</dbReference>
<dbReference type="CDD" id="cd17960">
    <property type="entry name" value="DEADc_DDX55"/>
    <property type="match status" value="1"/>
</dbReference>
<dbReference type="FunFam" id="3.40.50.300:FF:000877">
    <property type="entry name" value="RNA helicase"/>
    <property type="match status" value="1"/>
</dbReference>
<dbReference type="Gene3D" id="3.40.50.300">
    <property type="entry name" value="P-loop containing nucleotide triphosphate hydrolases"/>
    <property type="match status" value="2"/>
</dbReference>
<dbReference type="InterPro" id="IPR011545">
    <property type="entry name" value="DEAD/DEAH_box_helicase_dom"/>
</dbReference>
<dbReference type="InterPro" id="IPR014001">
    <property type="entry name" value="Helicase_ATP-bd"/>
</dbReference>
<dbReference type="InterPro" id="IPR001650">
    <property type="entry name" value="Helicase_C-like"/>
</dbReference>
<dbReference type="InterPro" id="IPR027417">
    <property type="entry name" value="P-loop_NTPase"/>
</dbReference>
<dbReference type="InterPro" id="IPR000629">
    <property type="entry name" value="RNA-helicase_DEAD-box_CS"/>
</dbReference>
<dbReference type="InterPro" id="IPR014014">
    <property type="entry name" value="RNA_helicase_DEAD_Q_motif"/>
</dbReference>
<dbReference type="InterPro" id="IPR025313">
    <property type="entry name" value="SPB4-like_CTE"/>
</dbReference>
<dbReference type="PANTHER" id="PTHR24031">
    <property type="entry name" value="RNA HELICASE"/>
    <property type="match status" value="1"/>
</dbReference>
<dbReference type="Pfam" id="PF13959">
    <property type="entry name" value="CTE_SPB4"/>
    <property type="match status" value="1"/>
</dbReference>
<dbReference type="Pfam" id="PF00270">
    <property type="entry name" value="DEAD"/>
    <property type="match status" value="1"/>
</dbReference>
<dbReference type="Pfam" id="PF00271">
    <property type="entry name" value="Helicase_C"/>
    <property type="match status" value="1"/>
</dbReference>
<dbReference type="SMART" id="SM00487">
    <property type="entry name" value="DEXDc"/>
    <property type="match status" value="1"/>
</dbReference>
<dbReference type="SMART" id="SM01178">
    <property type="entry name" value="DUF4217"/>
    <property type="match status" value="1"/>
</dbReference>
<dbReference type="SUPFAM" id="SSF52540">
    <property type="entry name" value="P-loop containing nucleoside triphosphate hydrolases"/>
    <property type="match status" value="2"/>
</dbReference>
<dbReference type="PROSITE" id="PS00039">
    <property type="entry name" value="DEAD_ATP_HELICASE"/>
    <property type="match status" value="1"/>
</dbReference>
<dbReference type="PROSITE" id="PS51192">
    <property type="entry name" value="HELICASE_ATP_BIND_1"/>
    <property type="match status" value="1"/>
</dbReference>
<dbReference type="PROSITE" id="PS51194">
    <property type="entry name" value="HELICASE_CTER"/>
    <property type="match status" value="1"/>
</dbReference>
<dbReference type="PROSITE" id="PS51195">
    <property type="entry name" value="Q_MOTIF"/>
    <property type="match status" value="1"/>
</dbReference>
<proteinExistence type="inferred from homology"/>
<sequence>MDSSPPNTIIEEAPPRFSELKPPLSEDIIEALDRSGFEVCTPVQAETIPFLCSHKDVVVDAATGSGKTLAFLLPFIEIIRRSNSYPPKPHQVMGVIISPTRELSAQIHKVARAVRLDFAKCREVEADMNTLEEEGANLLIGTPGRLSDMMKRMEFLDFRNLEILILDEADRLLDMGFQKQVNYIISRLPKQRRTGLFSATQTQAVADLAKAGLRNPYLKCEADQKSSQLVHLLIENKNKKLVVFFMTCACVDYWGLVISKIPSLKSISFFPTHGKMDQKGRDTALASFTEASSGVLLCTDVAARGLDIPGIVYIRSLAIKDREVLEKGLKAFVSFVRAYKEHQCSYIFSWKGLEIGKLAMGYGILSFPYISEVKQDRIGIVGFTPVQGITFEDIKFKNKSREKQRQQNLLARKDKLQQEKRGKRKKSSKEAVDDSNKASRKRKLTGRQRQTIQTAQDEEEMNLRL</sequence>
<keyword id="KW-0067">ATP-binding</keyword>
<keyword id="KW-0347">Helicase</keyword>
<keyword id="KW-0378">Hydrolase</keyword>
<keyword id="KW-0547">Nucleotide-binding</keyword>
<keyword id="KW-1185">Reference proteome</keyword>
<keyword id="KW-0694">RNA-binding</keyword>
<organism>
    <name type="scientific">Arabidopsis thaliana</name>
    <name type="common">Mouse-ear cress</name>
    <dbReference type="NCBI Taxonomy" id="3702"/>
    <lineage>
        <taxon>Eukaryota</taxon>
        <taxon>Viridiplantae</taxon>
        <taxon>Streptophyta</taxon>
        <taxon>Embryophyta</taxon>
        <taxon>Tracheophyta</taxon>
        <taxon>Spermatophyta</taxon>
        <taxon>Magnoliopsida</taxon>
        <taxon>eudicotyledons</taxon>
        <taxon>Gunneridae</taxon>
        <taxon>Pentapetalae</taxon>
        <taxon>rosids</taxon>
        <taxon>malvids</taxon>
        <taxon>Brassicales</taxon>
        <taxon>Brassicaceae</taxon>
        <taxon>Camelineae</taxon>
        <taxon>Arabidopsis</taxon>
    </lineage>
</organism>
<accession>Q9FVV4</accession>
<name>RH55_ARATH</name>
<evidence type="ECO:0000255" key="1">
    <source>
        <dbReference type="PROSITE-ProRule" id="PRU00541"/>
    </source>
</evidence>
<evidence type="ECO:0000255" key="2">
    <source>
        <dbReference type="PROSITE-ProRule" id="PRU00542"/>
    </source>
</evidence>
<evidence type="ECO:0000256" key="3">
    <source>
        <dbReference type="SAM" id="MobiDB-lite"/>
    </source>
</evidence>
<evidence type="ECO:0000305" key="4"/>
<protein>
    <recommendedName>
        <fullName>DEAD-box ATP-dependent RNA helicase 55</fullName>
        <ecNumber>3.6.4.13</ecNumber>
    </recommendedName>
</protein>
<comment type="catalytic activity">
    <reaction>
        <text>ATP + H2O = ADP + phosphate + H(+)</text>
        <dbReference type="Rhea" id="RHEA:13065"/>
        <dbReference type="ChEBI" id="CHEBI:15377"/>
        <dbReference type="ChEBI" id="CHEBI:15378"/>
        <dbReference type="ChEBI" id="CHEBI:30616"/>
        <dbReference type="ChEBI" id="CHEBI:43474"/>
        <dbReference type="ChEBI" id="CHEBI:456216"/>
        <dbReference type="EC" id="3.6.4.13"/>
    </reaction>
</comment>
<comment type="domain">
    <text>The Q motif is unique to and characteristic of the DEAD box family of RNA helicases and controls ATP binding and hydrolysis.</text>
</comment>
<comment type="similarity">
    <text evidence="4">Belongs to the DEAD box helicase family. DDX55/SPB4 subfamily.</text>
</comment>
<reference key="1">
    <citation type="journal article" date="2000" name="Nature">
        <title>Sequence and analysis of chromosome 1 of the plant Arabidopsis thaliana.</title>
        <authorList>
            <person name="Theologis A."/>
            <person name="Ecker J.R."/>
            <person name="Palm C.J."/>
            <person name="Federspiel N.A."/>
            <person name="Kaul S."/>
            <person name="White O."/>
            <person name="Alonso J."/>
            <person name="Altafi H."/>
            <person name="Araujo R."/>
            <person name="Bowman C.L."/>
            <person name="Brooks S.Y."/>
            <person name="Buehler E."/>
            <person name="Chan A."/>
            <person name="Chao Q."/>
            <person name="Chen H."/>
            <person name="Cheuk R.F."/>
            <person name="Chin C.W."/>
            <person name="Chung M.K."/>
            <person name="Conn L."/>
            <person name="Conway A.B."/>
            <person name="Conway A.R."/>
            <person name="Creasy T.H."/>
            <person name="Dewar K."/>
            <person name="Dunn P."/>
            <person name="Etgu P."/>
            <person name="Feldblyum T.V."/>
            <person name="Feng J.-D."/>
            <person name="Fong B."/>
            <person name="Fujii C.Y."/>
            <person name="Gill J.E."/>
            <person name="Goldsmith A.D."/>
            <person name="Haas B."/>
            <person name="Hansen N.F."/>
            <person name="Hughes B."/>
            <person name="Huizar L."/>
            <person name="Hunter J.L."/>
            <person name="Jenkins J."/>
            <person name="Johnson-Hopson C."/>
            <person name="Khan S."/>
            <person name="Khaykin E."/>
            <person name="Kim C.J."/>
            <person name="Koo H.L."/>
            <person name="Kremenetskaia I."/>
            <person name="Kurtz D.B."/>
            <person name="Kwan A."/>
            <person name="Lam B."/>
            <person name="Langin-Hooper S."/>
            <person name="Lee A."/>
            <person name="Lee J.M."/>
            <person name="Lenz C.A."/>
            <person name="Li J.H."/>
            <person name="Li Y.-P."/>
            <person name="Lin X."/>
            <person name="Liu S.X."/>
            <person name="Liu Z.A."/>
            <person name="Luros J.S."/>
            <person name="Maiti R."/>
            <person name="Marziali A."/>
            <person name="Militscher J."/>
            <person name="Miranda M."/>
            <person name="Nguyen M."/>
            <person name="Nierman W.C."/>
            <person name="Osborne B.I."/>
            <person name="Pai G."/>
            <person name="Peterson J."/>
            <person name="Pham P.K."/>
            <person name="Rizzo M."/>
            <person name="Rooney T."/>
            <person name="Rowley D."/>
            <person name="Sakano H."/>
            <person name="Salzberg S.L."/>
            <person name="Schwartz J.R."/>
            <person name="Shinn P."/>
            <person name="Southwick A.M."/>
            <person name="Sun H."/>
            <person name="Tallon L.J."/>
            <person name="Tambunga G."/>
            <person name="Toriumi M.J."/>
            <person name="Town C.D."/>
            <person name="Utterback T."/>
            <person name="Van Aken S."/>
            <person name="Vaysberg M."/>
            <person name="Vysotskaia V.S."/>
            <person name="Walker M."/>
            <person name="Wu D."/>
            <person name="Yu G."/>
            <person name="Fraser C.M."/>
            <person name="Venter J.C."/>
            <person name="Davis R.W."/>
        </authorList>
    </citation>
    <scope>NUCLEOTIDE SEQUENCE [LARGE SCALE GENOMIC DNA]</scope>
    <source>
        <strain>cv. Columbia</strain>
    </source>
</reference>
<reference key="2">
    <citation type="journal article" date="2017" name="Plant J.">
        <title>Araport11: a complete reannotation of the Arabidopsis thaliana reference genome.</title>
        <authorList>
            <person name="Cheng C.Y."/>
            <person name="Krishnakumar V."/>
            <person name="Chan A.P."/>
            <person name="Thibaud-Nissen F."/>
            <person name="Schobel S."/>
            <person name="Town C.D."/>
        </authorList>
    </citation>
    <scope>GENOME REANNOTATION</scope>
    <source>
        <strain>cv. Columbia</strain>
    </source>
</reference>
<reference key="3">
    <citation type="journal article" date="2004" name="Plant Biotechnol. J.">
        <title>DEAD-box RNA helicases in Arabidopsis thaliana: establishing a link between quantitative expression, gene structure and evolution of a family of genes.</title>
        <authorList>
            <person name="Mingam A."/>
            <person name="Toffano-Nioche C."/>
            <person name="Brunaud V."/>
            <person name="Boudet N."/>
            <person name="Kreis M."/>
            <person name="Lecharny A."/>
        </authorList>
    </citation>
    <scope>GENE FAMILY</scope>
    <scope>NOMENCLATURE</scope>
</reference>
<reference key="4">
    <citation type="journal article" date="2013" name="PLoS ONE">
        <title>Genome-wide comparative in silico analysis of the RNA helicase gene family in Zea mays and Glycine max: a comparison with Arabidopsis and Oryza sativa.</title>
        <authorList>
            <person name="Xu R."/>
            <person name="Zhang S."/>
            <person name="Huang J."/>
            <person name="Zheng C."/>
        </authorList>
    </citation>
    <scope>GENE FAMILY</scope>
</reference>